<evidence type="ECO:0000255" key="1">
    <source>
        <dbReference type="PROSITE-ProRule" id="PRU00169"/>
    </source>
</evidence>
<evidence type="ECO:0000255" key="2">
    <source>
        <dbReference type="PROSITE-ProRule" id="PRU00411"/>
    </source>
</evidence>
<evidence type="ECO:0000305" key="3"/>
<sequence>MIKVLVVDDHDLVRTGITRMLADIDGLQVVGQADSGEESLKKARELKPDVVLMDVKMPGIGGLEATRKMLRSHPDIKVVAVTVCEEDPFPTRLLQAGAAGYMTKGAGLAEMVQAIRLVFAGQRYISPQIAQQLALKSFQPQVNNSPFDLLSEREIQIALMIVGCQKVQTISDKLCLSPKTVNTYRYRIFEKLSISSDVELALLAVRHGMVDASA</sequence>
<reference key="1">
    <citation type="journal article" date="1994" name="J. Bacteriol.">
        <title>Genetic evidence that the gacA gene encodes the cognate response regulator for the lemA sensor in Pseudomonas syringae.</title>
        <authorList>
            <person name="Rich J.J."/>
            <person name="Kinscherf T.G."/>
            <person name="Kitten T."/>
            <person name="Willis D.K."/>
        </authorList>
    </citation>
    <scope>NUCLEOTIDE SEQUENCE [GENOMIC DNA]</scope>
</reference>
<reference key="2">
    <citation type="journal article" date="2005" name="Proc. Natl. Acad. Sci. U.S.A.">
        <title>Comparison of the complete genome sequences of Pseudomonas syringae pv. syringae B728a and pv. tomato DC3000.</title>
        <authorList>
            <person name="Feil H."/>
            <person name="Feil W.S."/>
            <person name="Chain P."/>
            <person name="Larimer F."/>
            <person name="Dibartolo G."/>
            <person name="Copeland A."/>
            <person name="Lykidis A."/>
            <person name="Trong S."/>
            <person name="Nolan M."/>
            <person name="Goltsman E."/>
            <person name="Thiel J."/>
            <person name="Malfatti S."/>
            <person name="Loper J.E."/>
            <person name="Lapidus A."/>
            <person name="Detter J.C."/>
            <person name="Land M."/>
            <person name="Richardson P.M."/>
            <person name="Kyrpides N.C."/>
            <person name="Ivanova N."/>
            <person name="Lindow S.E."/>
        </authorList>
    </citation>
    <scope>NUCLEOTIDE SEQUENCE [LARGE SCALE GENOMIC DNA]</scope>
    <source>
        <strain>B728a</strain>
    </source>
</reference>
<organism>
    <name type="scientific">Pseudomonas syringae pv. syringae (strain B728a)</name>
    <dbReference type="NCBI Taxonomy" id="205918"/>
    <lineage>
        <taxon>Bacteria</taxon>
        <taxon>Pseudomonadati</taxon>
        <taxon>Pseudomonadota</taxon>
        <taxon>Gammaproteobacteria</taxon>
        <taxon>Pseudomonadales</taxon>
        <taxon>Pseudomonadaceae</taxon>
        <taxon>Pseudomonas</taxon>
        <taxon>Pseudomonas syringae</taxon>
    </lineage>
</organism>
<comment type="function">
    <text>Forms part of a two-component regulatory system GacA/GacA(LemA). May be involved in lesion formation, swarming and in the production of extracellular protease, syringomycin and N-acyl-L-homoserine lactone (acyl-HSL).</text>
</comment>
<comment type="PTM">
    <text evidence="3">Phosphorylated by LemA.</text>
</comment>
<comment type="sequence caution" evidence="3">
    <conflict type="erroneous initiation">
        <sequence resource="EMBL-CDS" id="AAA65231"/>
    </conflict>
</comment>
<comment type="sequence caution" evidence="3">
    <conflict type="erroneous initiation">
        <sequence resource="EMBL-CDS" id="AAY37931"/>
    </conflict>
</comment>
<gene>
    <name type="primary">gacA</name>
    <name type="ordered locus">Psyr_2897</name>
</gene>
<feature type="chain" id="PRO_0000081289" description="Response regulator GacA">
    <location>
        <begin position="1"/>
        <end position="214"/>
    </location>
</feature>
<feature type="domain" description="Response regulatory" evidence="1">
    <location>
        <begin position="3"/>
        <end position="119"/>
    </location>
</feature>
<feature type="domain" description="HTH luxR-type" evidence="2">
    <location>
        <begin position="143"/>
        <end position="208"/>
    </location>
</feature>
<feature type="DNA-binding region" description="H-T-H motif" evidence="2">
    <location>
        <begin position="167"/>
        <end position="186"/>
    </location>
</feature>
<feature type="modified residue" description="4-aspartylphosphate" evidence="1">
    <location>
        <position position="54"/>
    </location>
</feature>
<accession>Q52376</accession>
<accession>Q4ZSE1</accession>
<keyword id="KW-0010">Activator</keyword>
<keyword id="KW-0238">DNA-binding</keyword>
<keyword id="KW-0597">Phosphoprotein</keyword>
<keyword id="KW-0804">Transcription</keyword>
<keyword id="KW-0805">Transcription regulation</keyword>
<keyword id="KW-0902">Two-component regulatory system</keyword>
<proteinExistence type="inferred from homology"/>
<name>GACA_PSEU2</name>
<protein>
    <recommendedName>
        <fullName>Response regulator GacA</fullName>
    </recommendedName>
    <alternativeName>
        <fullName>Global activator</fullName>
    </alternativeName>
</protein>
<dbReference type="EMBL" id="U09767">
    <property type="protein sequence ID" value="AAA65231.1"/>
    <property type="status" value="ALT_INIT"/>
    <property type="molecule type" value="Genomic_DNA"/>
</dbReference>
<dbReference type="EMBL" id="CP000075">
    <property type="protein sequence ID" value="AAY37931.1"/>
    <property type="status" value="ALT_INIT"/>
    <property type="molecule type" value="Genomic_DNA"/>
</dbReference>
<dbReference type="PIR" id="A55538">
    <property type="entry name" value="A55538"/>
</dbReference>
<dbReference type="RefSeq" id="YP_235969.1">
    <property type="nucleotide sequence ID" value="NC_007005.1"/>
</dbReference>
<dbReference type="SMR" id="Q52376"/>
<dbReference type="STRING" id="205918.Psyr_2897"/>
<dbReference type="KEGG" id="psb:Psyr_2897"/>
<dbReference type="PATRIC" id="fig|205918.7.peg.2953"/>
<dbReference type="eggNOG" id="COG2197">
    <property type="taxonomic scope" value="Bacteria"/>
</dbReference>
<dbReference type="HOGENOM" id="CLU_000445_90_1_6"/>
<dbReference type="OrthoDB" id="9796655at2"/>
<dbReference type="Proteomes" id="UP000000426">
    <property type="component" value="Chromosome"/>
</dbReference>
<dbReference type="GO" id="GO:0003677">
    <property type="term" value="F:DNA binding"/>
    <property type="evidence" value="ECO:0007669"/>
    <property type="project" value="UniProtKB-KW"/>
</dbReference>
<dbReference type="GO" id="GO:0000160">
    <property type="term" value="P:phosphorelay signal transduction system"/>
    <property type="evidence" value="ECO:0007669"/>
    <property type="project" value="UniProtKB-KW"/>
</dbReference>
<dbReference type="GO" id="GO:0006355">
    <property type="term" value="P:regulation of DNA-templated transcription"/>
    <property type="evidence" value="ECO:0007669"/>
    <property type="project" value="InterPro"/>
</dbReference>
<dbReference type="CDD" id="cd06170">
    <property type="entry name" value="LuxR_C_like"/>
    <property type="match status" value="1"/>
</dbReference>
<dbReference type="CDD" id="cd17535">
    <property type="entry name" value="REC_NarL-like"/>
    <property type="match status" value="1"/>
</dbReference>
<dbReference type="FunFam" id="3.40.50.2300:FF:000015">
    <property type="entry name" value="Two-component response regulator UvrY"/>
    <property type="match status" value="1"/>
</dbReference>
<dbReference type="Gene3D" id="3.40.50.2300">
    <property type="match status" value="1"/>
</dbReference>
<dbReference type="InterPro" id="IPR011006">
    <property type="entry name" value="CheY-like_superfamily"/>
</dbReference>
<dbReference type="InterPro" id="IPR016032">
    <property type="entry name" value="Sig_transdc_resp-reg_C-effctor"/>
</dbReference>
<dbReference type="InterPro" id="IPR001789">
    <property type="entry name" value="Sig_transdc_resp-reg_receiver"/>
</dbReference>
<dbReference type="InterPro" id="IPR000792">
    <property type="entry name" value="Tscrpt_reg_LuxR_C"/>
</dbReference>
<dbReference type="InterPro" id="IPR039420">
    <property type="entry name" value="WalR-like"/>
</dbReference>
<dbReference type="NCBIfam" id="NF007018">
    <property type="entry name" value="PRK09483.1"/>
    <property type="match status" value="1"/>
</dbReference>
<dbReference type="PANTHER" id="PTHR43214:SF3">
    <property type="entry name" value="RESPONSE REGULATOR UVRY"/>
    <property type="match status" value="1"/>
</dbReference>
<dbReference type="PANTHER" id="PTHR43214">
    <property type="entry name" value="TWO-COMPONENT RESPONSE REGULATOR"/>
    <property type="match status" value="1"/>
</dbReference>
<dbReference type="Pfam" id="PF00196">
    <property type="entry name" value="GerE"/>
    <property type="match status" value="1"/>
</dbReference>
<dbReference type="Pfam" id="PF00072">
    <property type="entry name" value="Response_reg"/>
    <property type="match status" value="1"/>
</dbReference>
<dbReference type="SMART" id="SM00421">
    <property type="entry name" value="HTH_LUXR"/>
    <property type="match status" value="1"/>
</dbReference>
<dbReference type="SMART" id="SM00448">
    <property type="entry name" value="REC"/>
    <property type="match status" value="1"/>
</dbReference>
<dbReference type="SUPFAM" id="SSF46894">
    <property type="entry name" value="C-terminal effector domain of the bipartite response regulators"/>
    <property type="match status" value="1"/>
</dbReference>
<dbReference type="SUPFAM" id="SSF52172">
    <property type="entry name" value="CheY-like"/>
    <property type="match status" value="1"/>
</dbReference>
<dbReference type="PROSITE" id="PS00622">
    <property type="entry name" value="HTH_LUXR_1"/>
    <property type="match status" value="1"/>
</dbReference>
<dbReference type="PROSITE" id="PS50043">
    <property type="entry name" value="HTH_LUXR_2"/>
    <property type="match status" value="1"/>
</dbReference>
<dbReference type="PROSITE" id="PS50110">
    <property type="entry name" value="RESPONSE_REGULATORY"/>
    <property type="match status" value="1"/>
</dbReference>